<comment type="subcellular location">
    <subcellularLocation>
        <location evidence="2">Cell membrane</location>
        <topology evidence="2">Multi-pass membrane protein</topology>
    </subcellularLocation>
</comment>
<comment type="similarity">
    <text evidence="2">Belongs to the acetate uptake transporter (AceTr) (TC 2.A.96) family.</text>
</comment>
<dbReference type="EMBL" id="AE000666">
    <property type="protein sequence ID" value="AAB84721.1"/>
    <property type="molecule type" value="Genomic_DNA"/>
</dbReference>
<dbReference type="PIR" id="E69126">
    <property type="entry name" value="E69126"/>
</dbReference>
<dbReference type="SMR" id="O26317"/>
<dbReference type="STRING" id="187420.MTH_215"/>
<dbReference type="PaxDb" id="187420-MTH_215"/>
<dbReference type="EnsemblBacteria" id="AAB84721">
    <property type="protein sequence ID" value="AAB84721"/>
    <property type="gene ID" value="MTH_215"/>
</dbReference>
<dbReference type="KEGG" id="mth:MTH_215"/>
<dbReference type="PATRIC" id="fig|187420.15.peg.184"/>
<dbReference type="HOGENOM" id="CLU_051062_3_0_2"/>
<dbReference type="InParanoid" id="O26317"/>
<dbReference type="Proteomes" id="UP000005223">
    <property type="component" value="Chromosome"/>
</dbReference>
<dbReference type="GO" id="GO:0005886">
    <property type="term" value="C:plasma membrane"/>
    <property type="evidence" value="ECO:0007669"/>
    <property type="project" value="UniProtKB-SubCell"/>
</dbReference>
<dbReference type="GO" id="GO:0015360">
    <property type="term" value="F:acetate:proton symporter activity"/>
    <property type="evidence" value="ECO:0007669"/>
    <property type="project" value="TreeGrafter"/>
</dbReference>
<dbReference type="GO" id="GO:0071422">
    <property type="term" value="P:succinate transmembrane transport"/>
    <property type="evidence" value="ECO:0007669"/>
    <property type="project" value="TreeGrafter"/>
</dbReference>
<dbReference type="InterPro" id="IPR000791">
    <property type="entry name" value="Gpr1/Fun34/SatP-like"/>
</dbReference>
<dbReference type="InterPro" id="IPR047622">
    <property type="entry name" value="GPR1_FUN34_YAAH"/>
</dbReference>
<dbReference type="InterPro" id="IPR047623">
    <property type="entry name" value="SatP"/>
</dbReference>
<dbReference type="NCBIfam" id="NF038013">
    <property type="entry name" value="AceTr_1"/>
    <property type="match status" value="1"/>
</dbReference>
<dbReference type="PANTHER" id="PTHR30178">
    <property type="entry name" value="INNER MEMBRANE PROTEIN YAAH"/>
    <property type="match status" value="1"/>
</dbReference>
<dbReference type="PANTHER" id="PTHR30178:SF3">
    <property type="entry name" value="SUCCINATE-ACETATE_PROTON SYMPORTER SATP"/>
    <property type="match status" value="1"/>
</dbReference>
<dbReference type="Pfam" id="PF01184">
    <property type="entry name" value="Gpr1_Fun34_YaaH"/>
    <property type="match status" value="1"/>
</dbReference>
<dbReference type="PROSITE" id="PS01114">
    <property type="entry name" value="GPR1_FUN34_YAAH"/>
    <property type="match status" value="1"/>
</dbReference>
<reference key="1">
    <citation type="journal article" date="1997" name="J. Bacteriol.">
        <title>Complete genome sequence of Methanobacterium thermoautotrophicum deltaH: functional analysis and comparative genomics.</title>
        <authorList>
            <person name="Smith D.R."/>
            <person name="Doucette-Stamm L.A."/>
            <person name="Deloughery C."/>
            <person name="Lee H.-M."/>
            <person name="Dubois J."/>
            <person name="Aldredge T."/>
            <person name="Bashirzadeh R."/>
            <person name="Blakely D."/>
            <person name="Cook R."/>
            <person name="Gilbert K."/>
            <person name="Harrison D."/>
            <person name="Hoang L."/>
            <person name="Keagle P."/>
            <person name="Lumm W."/>
            <person name="Pothier B."/>
            <person name="Qiu D."/>
            <person name="Spadafora R."/>
            <person name="Vicare R."/>
            <person name="Wang Y."/>
            <person name="Wierzbowski J."/>
            <person name="Gibson R."/>
            <person name="Jiwani N."/>
            <person name="Caruso A."/>
            <person name="Bush D."/>
            <person name="Safer H."/>
            <person name="Patwell D."/>
            <person name="Prabhakar S."/>
            <person name="McDougall S."/>
            <person name="Shimer G."/>
            <person name="Goyal A."/>
            <person name="Pietrovski S."/>
            <person name="Church G.M."/>
            <person name="Daniels C.J."/>
            <person name="Mao J.-I."/>
            <person name="Rice P."/>
            <person name="Noelling J."/>
            <person name="Reeve J.N."/>
        </authorList>
    </citation>
    <scope>NUCLEOTIDE SEQUENCE [LARGE SCALE GENOMIC DNA]</scope>
    <source>
        <strain>ATCC 29096 / DSM 1053 / JCM 10044 / NBRC 100330 / Delta H</strain>
    </source>
</reference>
<protein>
    <recommendedName>
        <fullName>Uncharacterized protein MTH_215</fullName>
    </recommendedName>
</protein>
<name>Y215_METTH</name>
<gene>
    <name type="ordered locus">MTH_215</name>
</gene>
<feature type="chain" id="PRO_0000135708" description="Uncharacterized protein MTH_215">
    <location>
        <begin position="1"/>
        <end position="204"/>
    </location>
</feature>
<feature type="transmembrane region" description="Helical" evidence="1">
    <location>
        <begin position="19"/>
        <end position="39"/>
    </location>
</feature>
<feature type="transmembrane region" description="Helical" evidence="1">
    <location>
        <begin position="42"/>
        <end position="62"/>
    </location>
</feature>
<feature type="transmembrane region" description="Helical" evidence="1">
    <location>
        <begin position="78"/>
        <end position="98"/>
    </location>
</feature>
<feature type="transmembrane region" description="Helical" evidence="1">
    <location>
        <begin position="116"/>
        <end position="136"/>
    </location>
</feature>
<feature type="transmembrane region" description="Helical" evidence="1">
    <location>
        <begin position="143"/>
        <end position="163"/>
    </location>
</feature>
<feature type="transmembrane region" description="Helical" evidence="1">
    <location>
        <begin position="167"/>
        <end position="187"/>
    </location>
</feature>
<proteinExistence type="inferred from homology"/>
<sequence length="204" mass="21932">MMYKVRNMRETEVVISDKTANPAPLGLLGFGITTILLNLHNAGLFPINSMILAMGFAYGGIAQILASVMEYRKGNTFGTVAFGSYGLFWWSLVLLLVIPNLKFLETSGTAAASADPVAMASYLFMWGLFTLLMFIATLKLKRGIQVIFISLAVLFFLLTAGEITGSALITAVAGYEGIFTGAAAMYVGLAEVINETHGRDILPT</sequence>
<accession>O26317</accession>
<organism>
    <name type="scientific">Methanothermobacter thermautotrophicus (strain ATCC 29096 / DSM 1053 / JCM 10044 / NBRC 100330 / Delta H)</name>
    <name type="common">Methanobacterium thermoautotrophicum</name>
    <dbReference type="NCBI Taxonomy" id="187420"/>
    <lineage>
        <taxon>Archaea</taxon>
        <taxon>Methanobacteriati</taxon>
        <taxon>Methanobacteriota</taxon>
        <taxon>Methanomada group</taxon>
        <taxon>Methanobacteria</taxon>
        <taxon>Methanobacteriales</taxon>
        <taxon>Methanobacteriaceae</taxon>
        <taxon>Methanothermobacter</taxon>
    </lineage>
</organism>
<keyword id="KW-1003">Cell membrane</keyword>
<keyword id="KW-0472">Membrane</keyword>
<keyword id="KW-1185">Reference proteome</keyword>
<keyword id="KW-0812">Transmembrane</keyword>
<keyword id="KW-1133">Transmembrane helix</keyword>
<evidence type="ECO:0000255" key="1"/>
<evidence type="ECO:0000305" key="2"/>